<evidence type="ECO:0000305" key="1"/>
<dbReference type="EC" id="1.-.-.-"/>
<dbReference type="EMBL" id="D84432">
    <property type="protein sequence ID" value="BAA12582.1"/>
    <property type="molecule type" value="Genomic_DNA"/>
</dbReference>
<dbReference type="EMBL" id="AL009126">
    <property type="protein sequence ID" value="CAB14352.1"/>
    <property type="molecule type" value="Genomic_DNA"/>
</dbReference>
<dbReference type="PIR" id="C69961">
    <property type="entry name" value="C69961"/>
</dbReference>
<dbReference type="RefSeq" id="NP_390301.1">
    <property type="nucleotide sequence ID" value="NC_000964.3"/>
</dbReference>
<dbReference type="RefSeq" id="WP_004398691.1">
    <property type="nucleotide sequence ID" value="NZ_OZ025638.1"/>
</dbReference>
<dbReference type="SMR" id="P54524"/>
<dbReference type="FunCoup" id="P54524">
    <property type="interactions" value="52"/>
</dbReference>
<dbReference type="STRING" id="224308.BSU24210"/>
<dbReference type="PaxDb" id="224308-BSU24210"/>
<dbReference type="EnsemblBacteria" id="CAB14352">
    <property type="protein sequence ID" value="CAB14352"/>
    <property type="gene ID" value="BSU_24210"/>
</dbReference>
<dbReference type="GeneID" id="938659"/>
<dbReference type="KEGG" id="bsu:BSU24210"/>
<dbReference type="PATRIC" id="fig|224308.179.peg.2637"/>
<dbReference type="eggNOG" id="COG1902">
    <property type="taxonomic scope" value="Bacteria"/>
</dbReference>
<dbReference type="InParanoid" id="P54524"/>
<dbReference type="OrthoDB" id="9772736at2"/>
<dbReference type="PhylomeDB" id="P54524"/>
<dbReference type="BioCyc" id="BSUB:BSU24210-MONOMER"/>
<dbReference type="Proteomes" id="UP000001570">
    <property type="component" value="Chromosome"/>
</dbReference>
<dbReference type="GO" id="GO:0010181">
    <property type="term" value="F:FMN binding"/>
    <property type="evidence" value="ECO:0007669"/>
    <property type="project" value="InterPro"/>
</dbReference>
<dbReference type="GO" id="GO:0016491">
    <property type="term" value="F:oxidoreductase activity"/>
    <property type="evidence" value="ECO:0007669"/>
    <property type="project" value="UniProtKB-KW"/>
</dbReference>
<dbReference type="CDD" id="cd04735">
    <property type="entry name" value="OYE_like_4_FMN"/>
    <property type="match status" value="1"/>
</dbReference>
<dbReference type="Gene3D" id="3.20.20.70">
    <property type="entry name" value="Aldolase class I"/>
    <property type="match status" value="1"/>
</dbReference>
<dbReference type="InterPro" id="IPR013785">
    <property type="entry name" value="Aldolase_TIM"/>
</dbReference>
<dbReference type="InterPro" id="IPR051799">
    <property type="entry name" value="NADH_flavin_oxidoreductase"/>
</dbReference>
<dbReference type="InterPro" id="IPR001155">
    <property type="entry name" value="OxRdtase_FMN_N"/>
</dbReference>
<dbReference type="PANTHER" id="PTHR43656">
    <property type="entry name" value="BINDING OXIDOREDUCTASE, PUTATIVE (AFU_ORTHOLOGUE AFUA_2G08260)-RELATED"/>
    <property type="match status" value="1"/>
</dbReference>
<dbReference type="PANTHER" id="PTHR43656:SF2">
    <property type="entry name" value="BINDING OXIDOREDUCTASE, PUTATIVE (AFU_ORTHOLOGUE AFUA_2G08260)-RELATED"/>
    <property type="match status" value="1"/>
</dbReference>
<dbReference type="Pfam" id="PF00724">
    <property type="entry name" value="Oxidored_FMN"/>
    <property type="match status" value="1"/>
</dbReference>
<dbReference type="SUPFAM" id="SSF51395">
    <property type="entry name" value="FMN-linked oxidoreductases"/>
    <property type="match status" value="1"/>
</dbReference>
<reference key="1">
    <citation type="journal article" date="1996" name="Microbiology">
        <title>Systematic sequencing of the 283 kb 210 degrees-232 degrees region of the Bacillus subtilis genome containing the skin element and many sporulation genes.</title>
        <authorList>
            <person name="Mizuno M."/>
            <person name="Masuda S."/>
            <person name="Takemaru K."/>
            <person name="Hosono S."/>
            <person name="Sato T."/>
            <person name="Takeuchi M."/>
            <person name="Kobayashi Y."/>
        </authorList>
    </citation>
    <scope>NUCLEOTIDE SEQUENCE [GENOMIC DNA]</scope>
    <source>
        <strain>168 / JH642</strain>
    </source>
</reference>
<reference key="2">
    <citation type="journal article" date="1997" name="Nature">
        <title>The complete genome sequence of the Gram-positive bacterium Bacillus subtilis.</title>
        <authorList>
            <person name="Kunst F."/>
            <person name="Ogasawara N."/>
            <person name="Moszer I."/>
            <person name="Albertini A.M."/>
            <person name="Alloni G."/>
            <person name="Azevedo V."/>
            <person name="Bertero M.G."/>
            <person name="Bessieres P."/>
            <person name="Bolotin A."/>
            <person name="Borchert S."/>
            <person name="Borriss R."/>
            <person name="Boursier L."/>
            <person name="Brans A."/>
            <person name="Braun M."/>
            <person name="Brignell S.C."/>
            <person name="Bron S."/>
            <person name="Brouillet S."/>
            <person name="Bruschi C.V."/>
            <person name="Caldwell B."/>
            <person name="Capuano V."/>
            <person name="Carter N.M."/>
            <person name="Choi S.-K."/>
            <person name="Codani J.-J."/>
            <person name="Connerton I.F."/>
            <person name="Cummings N.J."/>
            <person name="Daniel R.A."/>
            <person name="Denizot F."/>
            <person name="Devine K.M."/>
            <person name="Duesterhoeft A."/>
            <person name="Ehrlich S.D."/>
            <person name="Emmerson P.T."/>
            <person name="Entian K.-D."/>
            <person name="Errington J."/>
            <person name="Fabret C."/>
            <person name="Ferrari E."/>
            <person name="Foulger D."/>
            <person name="Fritz C."/>
            <person name="Fujita M."/>
            <person name="Fujita Y."/>
            <person name="Fuma S."/>
            <person name="Galizzi A."/>
            <person name="Galleron N."/>
            <person name="Ghim S.-Y."/>
            <person name="Glaser P."/>
            <person name="Goffeau A."/>
            <person name="Golightly E.J."/>
            <person name="Grandi G."/>
            <person name="Guiseppi G."/>
            <person name="Guy B.J."/>
            <person name="Haga K."/>
            <person name="Haiech J."/>
            <person name="Harwood C.R."/>
            <person name="Henaut A."/>
            <person name="Hilbert H."/>
            <person name="Holsappel S."/>
            <person name="Hosono S."/>
            <person name="Hullo M.-F."/>
            <person name="Itaya M."/>
            <person name="Jones L.-M."/>
            <person name="Joris B."/>
            <person name="Karamata D."/>
            <person name="Kasahara Y."/>
            <person name="Klaerr-Blanchard M."/>
            <person name="Klein C."/>
            <person name="Kobayashi Y."/>
            <person name="Koetter P."/>
            <person name="Koningstein G."/>
            <person name="Krogh S."/>
            <person name="Kumano M."/>
            <person name="Kurita K."/>
            <person name="Lapidus A."/>
            <person name="Lardinois S."/>
            <person name="Lauber J."/>
            <person name="Lazarevic V."/>
            <person name="Lee S.-M."/>
            <person name="Levine A."/>
            <person name="Liu H."/>
            <person name="Masuda S."/>
            <person name="Mauel C."/>
            <person name="Medigue C."/>
            <person name="Medina N."/>
            <person name="Mellado R.P."/>
            <person name="Mizuno M."/>
            <person name="Moestl D."/>
            <person name="Nakai S."/>
            <person name="Noback M."/>
            <person name="Noone D."/>
            <person name="O'Reilly M."/>
            <person name="Ogawa K."/>
            <person name="Ogiwara A."/>
            <person name="Oudega B."/>
            <person name="Park S.-H."/>
            <person name="Parro V."/>
            <person name="Pohl T.M."/>
            <person name="Portetelle D."/>
            <person name="Porwollik S."/>
            <person name="Prescott A.M."/>
            <person name="Presecan E."/>
            <person name="Pujic P."/>
            <person name="Purnelle B."/>
            <person name="Rapoport G."/>
            <person name="Rey M."/>
            <person name="Reynolds S."/>
            <person name="Rieger M."/>
            <person name="Rivolta C."/>
            <person name="Rocha E."/>
            <person name="Roche B."/>
            <person name="Rose M."/>
            <person name="Sadaie Y."/>
            <person name="Sato T."/>
            <person name="Scanlan E."/>
            <person name="Schleich S."/>
            <person name="Schroeter R."/>
            <person name="Scoffone F."/>
            <person name="Sekiguchi J."/>
            <person name="Sekowska A."/>
            <person name="Seror S.J."/>
            <person name="Serror P."/>
            <person name="Shin B.-S."/>
            <person name="Soldo B."/>
            <person name="Sorokin A."/>
            <person name="Tacconi E."/>
            <person name="Takagi T."/>
            <person name="Takahashi H."/>
            <person name="Takemaru K."/>
            <person name="Takeuchi M."/>
            <person name="Tamakoshi A."/>
            <person name="Tanaka T."/>
            <person name="Terpstra P."/>
            <person name="Tognoni A."/>
            <person name="Tosato V."/>
            <person name="Uchiyama S."/>
            <person name="Vandenbol M."/>
            <person name="Vannier F."/>
            <person name="Vassarotti A."/>
            <person name="Viari A."/>
            <person name="Wambutt R."/>
            <person name="Wedler E."/>
            <person name="Wedler H."/>
            <person name="Weitzenegger T."/>
            <person name="Winters P."/>
            <person name="Wipat A."/>
            <person name="Yamamoto H."/>
            <person name="Yamane K."/>
            <person name="Yasumoto K."/>
            <person name="Yata K."/>
            <person name="Yoshida K."/>
            <person name="Yoshikawa H.-F."/>
            <person name="Zumstein E."/>
            <person name="Yoshikawa H."/>
            <person name="Danchin A."/>
        </authorList>
    </citation>
    <scope>NUCLEOTIDE SEQUENCE [LARGE SCALE GENOMIC DNA]</scope>
    <source>
        <strain>168</strain>
    </source>
</reference>
<organism>
    <name type="scientific">Bacillus subtilis (strain 168)</name>
    <dbReference type="NCBI Taxonomy" id="224308"/>
    <lineage>
        <taxon>Bacteria</taxon>
        <taxon>Bacillati</taxon>
        <taxon>Bacillota</taxon>
        <taxon>Bacilli</taxon>
        <taxon>Bacillales</taxon>
        <taxon>Bacillaceae</taxon>
        <taxon>Bacillus</taxon>
    </lineage>
</organism>
<feature type="chain" id="PRO_0000194492" description="Probable NADH-dependent flavin oxidoreductase YqiG">
    <location>
        <begin position="1"/>
        <end position="372"/>
    </location>
</feature>
<proteinExistence type="inferred from homology"/>
<sequence length="372" mass="40805">MNPKYKPLFEPFTFKSGVTINNRIAVAPMTHYASNEDGTISEAELDYIIPRSKEMGMVITACANVTPDGKAFPGQPAIHDDSNIPGLKKLAQAIQAQGAKAVVQIHHGGIECPSELVPQQDVVGPSDVFDNGKQIARALTEEEVENIVKAFGEATRRAIEAGFDGVEIHGANGYLIQQFYSPKTNQRTDRWGGSDEKRLAFPLAIVDEVKKAASEHAKGAFLVGYRLSPEEPETPGLTMTETYTLVDALGDKELDYLHISLMDVNSKARRGADPTRTRMDLLNERVGNKVPLIAVGSIHSADDALAVIENGIPLVAMGREILVDPNWTVKVKEGREKQIETVIKGTDKEKYHLPEPLWQAIVNTQGWVPYKD</sequence>
<accession>P54524</accession>
<protein>
    <recommendedName>
        <fullName>Probable NADH-dependent flavin oxidoreductase YqiG</fullName>
        <ecNumber>1.-.-.-</ecNumber>
    </recommendedName>
</protein>
<gene>
    <name type="primary">yqiG</name>
    <name type="ordered locus">BSU24210</name>
</gene>
<name>YQIG_BACSU</name>
<comment type="similarity">
    <text evidence="1">Belongs to the NADH:flavin oxidoreductase/NADH oxidase family.</text>
</comment>
<keyword id="KW-0274">FAD</keyword>
<keyword id="KW-0285">Flavoprotein</keyword>
<keyword id="KW-0520">NAD</keyword>
<keyword id="KW-0560">Oxidoreductase</keyword>
<keyword id="KW-1185">Reference proteome</keyword>